<sequence>MSKTLYQKLYDAHVVYSAPEETPLLYIDRHLVHEVTSPQAFDGLRAMGRKVRQPGKTFATMDHNVSTQTKDINASGEMARIQMQELIKNCEEFGVLLYDLNHPYQGIVHVIGPEQGMTLPGMTIVCGDSHTATHGAFGSLAFGIGTSEVEHVLATQTLKQGRAKTMKIEVTGDAAEGITAKDIVLAVIGKTGSAGGTGHVVEFCGKAIQALSMEGRMTLCNMAIEMGAKAGLVAPDDTTFDYLKGRQFAPTGSNWEQAVAYWRTLKSDDDAKFDTVVTLRAEDIAPQVTWGTNPGQVIAVNQTIPAPESFSDPGERASAEKALAYMDLKPGIKLTEVPIDKVFIGSCTNSRIEDLRAAAAIAKGRKVASGVQAIVVPGSGPVKAQAEAEGLDKIFIDAGFEWRLPGCSMCLAMNNDRLNPGERCASTSNRNFEGRQGRGGRTHLVSPAMAAAAAIAGHFADIRDIH</sequence>
<accession>A8G9Q9</accession>
<protein>
    <recommendedName>
        <fullName evidence="1">3-isopropylmalate dehydratase large subunit</fullName>
        <ecNumber evidence="1">4.2.1.33</ecNumber>
    </recommendedName>
    <alternativeName>
        <fullName evidence="1">Alpha-IPM isomerase</fullName>
        <shortName evidence="1">IPMI</shortName>
    </alternativeName>
    <alternativeName>
        <fullName evidence="1">Isopropylmalate isomerase</fullName>
    </alternativeName>
</protein>
<proteinExistence type="inferred from homology"/>
<evidence type="ECO:0000255" key="1">
    <source>
        <dbReference type="HAMAP-Rule" id="MF_01026"/>
    </source>
</evidence>
<feature type="chain" id="PRO_1000063603" description="3-isopropylmalate dehydratase large subunit">
    <location>
        <begin position="1"/>
        <end position="466"/>
    </location>
</feature>
<feature type="binding site" evidence="1">
    <location>
        <position position="347"/>
    </location>
    <ligand>
        <name>[4Fe-4S] cluster</name>
        <dbReference type="ChEBI" id="CHEBI:49883"/>
    </ligand>
</feature>
<feature type="binding site" evidence="1">
    <location>
        <position position="407"/>
    </location>
    <ligand>
        <name>[4Fe-4S] cluster</name>
        <dbReference type="ChEBI" id="CHEBI:49883"/>
    </ligand>
</feature>
<feature type="binding site" evidence="1">
    <location>
        <position position="410"/>
    </location>
    <ligand>
        <name>[4Fe-4S] cluster</name>
        <dbReference type="ChEBI" id="CHEBI:49883"/>
    </ligand>
</feature>
<reference key="1">
    <citation type="submission" date="2007-09" db="EMBL/GenBank/DDBJ databases">
        <title>Complete sequence of chromosome of Serratia proteamaculans 568.</title>
        <authorList>
            <consortium name="US DOE Joint Genome Institute"/>
            <person name="Copeland A."/>
            <person name="Lucas S."/>
            <person name="Lapidus A."/>
            <person name="Barry K."/>
            <person name="Glavina del Rio T."/>
            <person name="Dalin E."/>
            <person name="Tice H."/>
            <person name="Pitluck S."/>
            <person name="Chain P."/>
            <person name="Malfatti S."/>
            <person name="Shin M."/>
            <person name="Vergez L."/>
            <person name="Schmutz J."/>
            <person name="Larimer F."/>
            <person name="Land M."/>
            <person name="Hauser L."/>
            <person name="Kyrpides N."/>
            <person name="Kim E."/>
            <person name="Taghavi S."/>
            <person name="Newman L."/>
            <person name="Vangronsveld J."/>
            <person name="van der Lelie D."/>
            <person name="Richardson P."/>
        </authorList>
    </citation>
    <scope>NUCLEOTIDE SEQUENCE [LARGE SCALE GENOMIC DNA]</scope>
    <source>
        <strain>568</strain>
    </source>
</reference>
<name>LEUC_SERP5</name>
<comment type="function">
    <text evidence="1">Catalyzes the isomerization between 2-isopropylmalate and 3-isopropylmalate, via the formation of 2-isopropylmaleate.</text>
</comment>
<comment type="catalytic activity">
    <reaction evidence="1">
        <text>(2R,3S)-3-isopropylmalate = (2S)-2-isopropylmalate</text>
        <dbReference type="Rhea" id="RHEA:32287"/>
        <dbReference type="ChEBI" id="CHEBI:1178"/>
        <dbReference type="ChEBI" id="CHEBI:35121"/>
        <dbReference type="EC" id="4.2.1.33"/>
    </reaction>
</comment>
<comment type="cofactor">
    <cofactor evidence="1">
        <name>[4Fe-4S] cluster</name>
        <dbReference type="ChEBI" id="CHEBI:49883"/>
    </cofactor>
    <text evidence="1">Binds 1 [4Fe-4S] cluster per subunit.</text>
</comment>
<comment type="pathway">
    <text evidence="1">Amino-acid biosynthesis; L-leucine biosynthesis; L-leucine from 3-methyl-2-oxobutanoate: step 2/4.</text>
</comment>
<comment type="subunit">
    <text evidence="1">Heterodimer of LeuC and LeuD.</text>
</comment>
<comment type="similarity">
    <text evidence="1">Belongs to the aconitase/IPM isomerase family. LeuC type 1 subfamily.</text>
</comment>
<gene>
    <name evidence="1" type="primary">leuC</name>
    <name type="ordered locus">Spro_0743</name>
</gene>
<organism>
    <name type="scientific">Serratia proteamaculans (strain 568)</name>
    <dbReference type="NCBI Taxonomy" id="399741"/>
    <lineage>
        <taxon>Bacteria</taxon>
        <taxon>Pseudomonadati</taxon>
        <taxon>Pseudomonadota</taxon>
        <taxon>Gammaproteobacteria</taxon>
        <taxon>Enterobacterales</taxon>
        <taxon>Yersiniaceae</taxon>
        <taxon>Serratia</taxon>
    </lineage>
</organism>
<dbReference type="EC" id="4.2.1.33" evidence="1"/>
<dbReference type="EMBL" id="CP000826">
    <property type="protein sequence ID" value="ABV39849.1"/>
    <property type="molecule type" value="Genomic_DNA"/>
</dbReference>
<dbReference type="SMR" id="A8G9Q9"/>
<dbReference type="STRING" id="399741.Spro_0743"/>
<dbReference type="KEGG" id="spe:Spro_0743"/>
<dbReference type="eggNOG" id="COG0065">
    <property type="taxonomic scope" value="Bacteria"/>
</dbReference>
<dbReference type="HOGENOM" id="CLU_006714_3_4_6"/>
<dbReference type="OrthoDB" id="9802769at2"/>
<dbReference type="UniPathway" id="UPA00048">
    <property type="reaction ID" value="UER00071"/>
</dbReference>
<dbReference type="GO" id="GO:0003861">
    <property type="term" value="F:3-isopropylmalate dehydratase activity"/>
    <property type="evidence" value="ECO:0007669"/>
    <property type="project" value="UniProtKB-UniRule"/>
</dbReference>
<dbReference type="GO" id="GO:0051539">
    <property type="term" value="F:4 iron, 4 sulfur cluster binding"/>
    <property type="evidence" value="ECO:0007669"/>
    <property type="project" value="UniProtKB-KW"/>
</dbReference>
<dbReference type="GO" id="GO:0046872">
    <property type="term" value="F:metal ion binding"/>
    <property type="evidence" value="ECO:0007669"/>
    <property type="project" value="UniProtKB-KW"/>
</dbReference>
<dbReference type="GO" id="GO:0009098">
    <property type="term" value="P:L-leucine biosynthetic process"/>
    <property type="evidence" value="ECO:0007669"/>
    <property type="project" value="UniProtKB-UniRule"/>
</dbReference>
<dbReference type="CDD" id="cd01583">
    <property type="entry name" value="IPMI"/>
    <property type="match status" value="1"/>
</dbReference>
<dbReference type="FunFam" id="3.30.499.10:FF:000006">
    <property type="entry name" value="3-isopropylmalate dehydratase large subunit"/>
    <property type="match status" value="1"/>
</dbReference>
<dbReference type="FunFam" id="3.30.499.10:FF:000007">
    <property type="entry name" value="3-isopropylmalate dehydratase large subunit"/>
    <property type="match status" value="1"/>
</dbReference>
<dbReference type="Gene3D" id="3.30.499.10">
    <property type="entry name" value="Aconitase, domain 3"/>
    <property type="match status" value="2"/>
</dbReference>
<dbReference type="HAMAP" id="MF_01026">
    <property type="entry name" value="LeuC_type1"/>
    <property type="match status" value="1"/>
</dbReference>
<dbReference type="InterPro" id="IPR004430">
    <property type="entry name" value="3-IsopropMal_deHydase_lsu"/>
</dbReference>
<dbReference type="InterPro" id="IPR015931">
    <property type="entry name" value="Acnase/IPM_dHydase_lsu_aba_1/3"/>
</dbReference>
<dbReference type="InterPro" id="IPR001030">
    <property type="entry name" value="Acoase/IPM_deHydtase_lsu_aba"/>
</dbReference>
<dbReference type="InterPro" id="IPR018136">
    <property type="entry name" value="Aconitase_4Fe-4S_BS"/>
</dbReference>
<dbReference type="InterPro" id="IPR036008">
    <property type="entry name" value="Aconitase_4Fe-4S_dom"/>
</dbReference>
<dbReference type="InterPro" id="IPR050067">
    <property type="entry name" value="IPM_dehydratase_rel_enz"/>
</dbReference>
<dbReference type="InterPro" id="IPR033941">
    <property type="entry name" value="IPMI_cat"/>
</dbReference>
<dbReference type="NCBIfam" id="TIGR00170">
    <property type="entry name" value="leuC"/>
    <property type="match status" value="1"/>
</dbReference>
<dbReference type="NCBIfam" id="NF004016">
    <property type="entry name" value="PRK05478.1"/>
    <property type="match status" value="1"/>
</dbReference>
<dbReference type="NCBIfam" id="NF009116">
    <property type="entry name" value="PRK12466.1"/>
    <property type="match status" value="1"/>
</dbReference>
<dbReference type="PANTHER" id="PTHR43822:SF9">
    <property type="entry name" value="3-ISOPROPYLMALATE DEHYDRATASE"/>
    <property type="match status" value="1"/>
</dbReference>
<dbReference type="PANTHER" id="PTHR43822">
    <property type="entry name" value="HOMOACONITASE, MITOCHONDRIAL-RELATED"/>
    <property type="match status" value="1"/>
</dbReference>
<dbReference type="Pfam" id="PF00330">
    <property type="entry name" value="Aconitase"/>
    <property type="match status" value="1"/>
</dbReference>
<dbReference type="PRINTS" id="PR00415">
    <property type="entry name" value="ACONITASE"/>
</dbReference>
<dbReference type="SUPFAM" id="SSF53732">
    <property type="entry name" value="Aconitase iron-sulfur domain"/>
    <property type="match status" value="1"/>
</dbReference>
<dbReference type="PROSITE" id="PS00450">
    <property type="entry name" value="ACONITASE_1"/>
    <property type="match status" value="1"/>
</dbReference>
<dbReference type="PROSITE" id="PS01244">
    <property type="entry name" value="ACONITASE_2"/>
    <property type="match status" value="1"/>
</dbReference>
<keyword id="KW-0004">4Fe-4S</keyword>
<keyword id="KW-0028">Amino-acid biosynthesis</keyword>
<keyword id="KW-0100">Branched-chain amino acid biosynthesis</keyword>
<keyword id="KW-0408">Iron</keyword>
<keyword id="KW-0411">Iron-sulfur</keyword>
<keyword id="KW-0432">Leucine biosynthesis</keyword>
<keyword id="KW-0456">Lyase</keyword>
<keyword id="KW-0479">Metal-binding</keyword>